<protein>
    <recommendedName>
        <fullName>ATP synthase protein 8</fullName>
    </recommendedName>
    <alternativeName>
        <fullName>A6L</fullName>
    </alternativeName>
    <alternativeName>
        <fullName>F-ATPase subunit 8</fullName>
    </alternativeName>
</protein>
<geneLocation type="mitochondrion"/>
<dbReference type="EMBL" id="U62532">
    <property type="protein sequence ID" value="AAC60309.1"/>
    <property type="molecule type" value="Genomic_DNA"/>
</dbReference>
<dbReference type="PIR" id="T11458">
    <property type="entry name" value="T11458"/>
</dbReference>
<dbReference type="RefSeq" id="NP_008320.1">
    <property type="nucleotide sequence ID" value="NC_001778.1"/>
</dbReference>
<dbReference type="SMR" id="Q95912"/>
<dbReference type="GeneID" id="808031"/>
<dbReference type="CTD" id="4509"/>
<dbReference type="GO" id="GO:0031966">
    <property type="term" value="C:mitochondrial membrane"/>
    <property type="evidence" value="ECO:0007669"/>
    <property type="project" value="UniProtKB-SubCell"/>
</dbReference>
<dbReference type="GO" id="GO:0045259">
    <property type="term" value="C:proton-transporting ATP synthase complex"/>
    <property type="evidence" value="ECO:0007669"/>
    <property type="project" value="UniProtKB-KW"/>
</dbReference>
<dbReference type="GO" id="GO:0015078">
    <property type="term" value="F:proton transmembrane transporter activity"/>
    <property type="evidence" value="ECO:0007669"/>
    <property type="project" value="InterPro"/>
</dbReference>
<dbReference type="GO" id="GO:0015986">
    <property type="term" value="P:proton motive force-driven ATP synthesis"/>
    <property type="evidence" value="ECO:0007669"/>
    <property type="project" value="InterPro"/>
</dbReference>
<dbReference type="InterPro" id="IPR001421">
    <property type="entry name" value="ATP8_metazoa"/>
</dbReference>
<dbReference type="InterPro" id="IPR050635">
    <property type="entry name" value="ATPase_protein_8"/>
</dbReference>
<dbReference type="PANTHER" id="PTHR39937">
    <property type="entry name" value="ATP SYNTHASE PROTEIN 8"/>
    <property type="match status" value="1"/>
</dbReference>
<dbReference type="PANTHER" id="PTHR39937:SF1">
    <property type="entry name" value="ATP SYNTHASE PROTEIN 8"/>
    <property type="match status" value="1"/>
</dbReference>
<dbReference type="Pfam" id="PF00895">
    <property type="entry name" value="ATP-synt_8"/>
    <property type="match status" value="1"/>
</dbReference>
<name>ATP8_POLOR</name>
<accession>Q95912</accession>
<organism>
    <name type="scientific">Polypterus ornatipinnis</name>
    <name type="common">Ornate bichir</name>
    <dbReference type="NCBI Taxonomy" id="49895"/>
    <lineage>
        <taxon>Eukaryota</taxon>
        <taxon>Metazoa</taxon>
        <taxon>Chordata</taxon>
        <taxon>Craniata</taxon>
        <taxon>Vertebrata</taxon>
        <taxon>Euteleostomi</taxon>
        <taxon>Actinopterygii</taxon>
        <taxon>Polypteriformes</taxon>
        <taxon>Polypteridae</taxon>
        <taxon>Polypterus</taxon>
    </lineage>
</organism>
<keyword id="KW-0066">ATP synthesis</keyword>
<keyword id="KW-0138">CF(0)</keyword>
<keyword id="KW-0375">Hydrogen ion transport</keyword>
<keyword id="KW-0406">Ion transport</keyword>
<keyword id="KW-0472">Membrane</keyword>
<keyword id="KW-0496">Mitochondrion</keyword>
<keyword id="KW-0812">Transmembrane</keyword>
<keyword id="KW-1133">Transmembrane helix</keyword>
<keyword id="KW-0813">Transport</keyword>
<gene>
    <name type="primary">mt-atp8</name>
    <name type="synonym">atp8</name>
    <name type="synonym">atpase8</name>
    <name type="synonym">mtatp8</name>
</gene>
<feature type="chain" id="PRO_0000195572" description="ATP synthase protein 8">
    <location>
        <begin position="1"/>
        <end position="55"/>
    </location>
</feature>
<feature type="transmembrane region" description="Helical" evidence="2">
    <location>
        <begin position="4"/>
        <end position="24"/>
    </location>
</feature>
<sequence>MPQLNPNPWFTILIFTWAVFLTILPNKVTSHKMPNELLTKDPSNLLTEIWYWPWH</sequence>
<comment type="function">
    <text evidence="1">Mitochondrial membrane ATP synthase (F(1)F(0) ATP synthase or Complex V) produces ATP from ADP in the presence of a proton gradient across the membrane which is generated by electron transport complexes of the respiratory chain. F-type ATPases consist of two structural domains, F(1) - containing the extramembraneous catalytic core and F(0) - containing the membrane proton channel, linked together by a central stalk and a peripheral stalk. During catalysis, ATP synthesis in the catalytic domain of F(1) is coupled via a rotary mechanism of the central stalk subunits to proton translocation. Part of the complex F(0) domain. Minor subunit located with subunit a in the membrane (By similarity).</text>
</comment>
<comment type="subunit">
    <text evidence="1">F-type ATPases have 2 components, CF(1) - the catalytic core - and CF(0) - the membrane proton channel.</text>
</comment>
<comment type="subcellular location">
    <subcellularLocation>
        <location>Mitochondrion membrane</location>
        <topology>Single-pass membrane protein</topology>
    </subcellularLocation>
</comment>
<comment type="similarity">
    <text evidence="3">Belongs to the ATPase protein 8 family.</text>
</comment>
<evidence type="ECO:0000250" key="1"/>
<evidence type="ECO:0000255" key="2"/>
<evidence type="ECO:0000305" key="3"/>
<proteinExistence type="inferred from homology"/>
<reference key="1">
    <citation type="journal article" date="1996" name="Genetics">
        <title>The complete mitochondrial DNA sequence of the bichir (Polypterus ornatipinnis), a basal ray-finned fish: ancient establishment of the consensus vertebrate gene order.</title>
        <authorList>
            <person name="Noack K."/>
            <person name="Zardoya R."/>
            <person name="Meyer A."/>
        </authorList>
    </citation>
    <scope>NUCLEOTIDE SEQUENCE [GENOMIC DNA]</scope>
</reference>